<name>CINA_STRP1</name>
<evidence type="ECO:0000255" key="1">
    <source>
        <dbReference type="HAMAP-Rule" id="MF_00226"/>
    </source>
</evidence>
<sequence>MKAELIAVGTEILTGQIVNTNAQFLSEKMAELGIDVYFQTAVGDNEERLLSVITTASQRSNLVILCGGLGPTKDDLTKQTLAKYLRKDLVYDEQACQKLDDFFAKRKPSSRTPNNERQAQVIEGSIPLPNKTGLAVGGFITVDGISYVVLPGPPSELKPMVNEELVPLLSKQYSTLYSKVLRFFGIGESQLVTVLSDFIENQTDPTIAPYAKTGEVTLRLSTKTENQALADKKLGQLEAQLLSRKTLEGQPLADVFYGYGEDNSLARETFELLVKYDKTITAAESLTAGLFQSTLASFPGASQVFNGGFVTYSMEEKAKMLGLPLEELKSHGVVSAYTAEGMAEQARLLTGADIGVSLTGVAGPDMLEEQPAGTVFIGLATQNKVESIKVLISGRSRLDVRYIATLHAFNMVRKTLLKLENLL</sequence>
<keyword id="KW-1185">Reference proteome</keyword>
<accession>Q99XP1</accession>
<accession>Q48W57</accession>
<organism>
    <name type="scientific">Streptococcus pyogenes serotype M1</name>
    <dbReference type="NCBI Taxonomy" id="301447"/>
    <lineage>
        <taxon>Bacteria</taxon>
        <taxon>Bacillati</taxon>
        <taxon>Bacillota</taxon>
        <taxon>Bacilli</taxon>
        <taxon>Lactobacillales</taxon>
        <taxon>Streptococcaceae</taxon>
        <taxon>Streptococcus</taxon>
    </lineage>
</organism>
<proteinExistence type="inferred from homology"/>
<reference key="1">
    <citation type="journal article" date="2001" name="Proc. Natl. Acad. Sci. U.S.A.">
        <title>Complete genome sequence of an M1 strain of Streptococcus pyogenes.</title>
        <authorList>
            <person name="Ferretti J.J."/>
            <person name="McShan W.M."/>
            <person name="Ajdic D.J."/>
            <person name="Savic D.J."/>
            <person name="Savic G."/>
            <person name="Lyon K."/>
            <person name="Primeaux C."/>
            <person name="Sezate S."/>
            <person name="Suvorov A.N."/>
            <person name="Kenton S."/>
            <person name="Lai H.S."/>
            <person name="Lin S.P."/>
            <person name="Qian Y."/>
            <person name="Jia H.G."/>
            <person name="Najar F.Z."/>
            <person name="Ren Q."/>
            <person name="Zhu H."/>
            <person name="Song L."/>
            <person name="White J."/>
            <person name="Yuan X."/>
            <person name="Clifton S.W."/>
            <person name="Roe B.A."/>
            <person name="McLaughlin R.E."/>
        </authorList>
    </citation>
    <scope>NUCLEOTIDE SEQUENCE [LARGE SCALE GENOMIC DNA]</scope>
    <source>
        <strain>ATCC 700294 / SF370 / Serotype M1</strain>
    </source>
</reference>
<reference key="2">
    <citation type="journal article" date="2005" name="J. Infect. Dis.">
        <title>Evolutionary origin and emergence of a highly successful clone of serotype M1 group A Streptococcus involved multiple horizontal gene transfer events.</title>
        <authorList>
            <person name="Sumby P."/>
            <person name="Porcella S.F."/>
            <person name="Madrigal A.G."/>
            <person name="Barbian K.D."/>
            <person name="Virtaneva K."/>
            <person name="Ricklefs S.M."/>
            <person name="Sturdevant D.E."/>
            <person name="Graham M.R."/>
            <person name="Vuopio-Varkila J."/>
            <person name="Hoe N.P."/>
            <person name="Musser J.M."/>
        </authorList>
    </citation>
    <scope>NUCLEOTIDE SEQUENCE [LARGE SCALE GENOMIC DNA]</scope>
    <source>
        <strain>ATCC BAA-947 / MGAS5005 / Serotype M1</strain>
    </source>
</reference>
<dbReference type="EMBL" id="AE004092">
    <property type="protein sequence ID" value="AAK34762.1"/>
    <property type="molecule type" value="Genomic_DNA"/>
</dbReference>
<dbReference type="EMBL" id="CP000017">
    <property type="protein sequence ID" value="AAZ52418.1"/>
    <property type="molecule type" value="Genomic_DNA"/>
</dbReference>
<dbReference type="RefSeq" id="NP_270041.1">
    <property type="nucleotide sequence ID" value="NC_002737.2"/>
</dbReference>
<dbReference type="SMR" id="Q99XP1"/>
<dbReference type="PaxDb" id="1314-HKU360_01914"/>
<dbReference type="KEGG" id="spy:SPy_2117"/>
<dbReference type="KEGG" id="spz:M5005_Spy1800"/>
<dbReference type="PATRIC" id="fig|160490.10.peg.1834"/>
<dbReference type="HOGENOM" id="CLU_030805_9_3_9"/>
<dbReference type="OMA" id="TAPGMIW"/>
<dbReference type="Proteomes" id="UP000000750">
    <property type="component" value="Chromosome"/>
</dbReference>
<dbReference type="CDD" id="cd00885">
    <property type="entry name" value="cinA"/>
    <property type="match status" value="1"/>
</dbReference>
<dbReference type="Gene3D" id="3.30.70.2860">
    <property type="match status" value="1"/>
</dbReference>
<dbReference type="Gene3D" id="3.90.950.20">
    <property type="entry name" value="CinA-like"/>
    <property type="match status" value="1"/>
</dbReference>
<dbReference type="Gene3D" id="3.40.980.10">
    <property type="entry name" value="MoaB/Mog-like domain"/>
    <property type="match status" value="1"/>
</dbReference>
<dbReference type="HAMAP" id="MF_00226_B">
    <property type="entry name" value="CinA_B"/>
    <property type="match status" value="1"/>
</dbReference>
<dbReference type="InterPro" id="IPR050101">
    <property type="entry name" value="CinA"/>
</dbReference>
<dbReference type="InterPro" id="IPR036653">
    <property type="entry name" value="CinA-like_C"/>
</dbReference>
<dbReference type="InterPro" id="IPR008136">
    <property type="entry name" value="CinA_C"/>
</dbReference>
<dbReference type="InterPro" id="IPR041424">
    <property type="entry name" value="CinA_KH"/>
</dbReference>
<dbReference type="InterPro" id="IPR008135">
    <property type="entry name" value="Competence-induced_CinA"/>
</dbReference>
<dbReference type="InterPro" id="IPR036425">
    <property type="entry name" value="MoaB/Mog-like_dom_sf"/>
</dbReference>
<dbReference type="InterPro" id="IPR001453">
    <property type="entry name" value="MoaB/Mog_dom"/>
</dbReference>
<dbReference type="NCBIfam" id="TIGR00200">
    <property type="entry name" value="cinA_nterm"/>
    <property type="match status" value="1"/>
</dbReference>
<dbReference type="NCBIfam" id="TIGR00177">
    <property type="entry name" value="molyb_syn"/>
    <property type="match status" value="1"/>
</dbReference>
<dbReference type="NCBIfam" id="TIGR00199">
    <property type="entry name" value="PncC_domain"/>
    <property type="match status" value="1"/>
</dbReference>
<dbReference type="NCBIfam" id="NF001813">
    <property type="entry name" value="PRK00549.1"/>
    <property type="match status" value="1"/>
</dbReference>
<dbReference type="PANTHER" id="PTHR13939">
    <property type="entry name" value="NICOTINAMIDE-NUCLEOTIDE AMIDOHYDROLASE PNCC"/>
    <property type="match status" value="1"/>
</dbReference>
<dbReference type="PANTHER" id="PTHR13939:SF0">
    <property type="entry name" value="NMN AMIDOHYDROLASE-LIKE PROTEIN YFAY"/>
    <property type="match status" value="1"/>
</dbReference>
<dbReference type="Pfam" id="PF02464">
    <property type="entry name" value="CinA"/>
    <property type="match status" value="1"/>
</dbReference>
<dbReference type="Pfam" id="PF18146">
    <property type="entry name" value="CinA_KH"/>
    <property type="match status" value="1"/>
</dbReference>
<dbReference type="Pfam" id="PF00994">
    <property type="entry name" value="MoCF_biosynth"/>
    <property type="match status" value="1"/>
</dbReference>
<dbReference type="PIRSF" id="PIRSF006728">
    <property type="entry name" value="CinA"/>
    <property type="match status" value="1"/>
</dbReference>
<dbReference type="SMART" id="SM00852">
    <property type="entry name" value="MoCF_biosynth"/>
    <property type="match status" value="1"/>
</dbReference>
<dbReference type="SUPFAM" id="SSF142433">
    <property type="entry name" value="CinA-like"/>
    <property type="match status" value="1"/>
</dbReference>
<dbReference type="SUPFAM" id="SSF53218">
    <property type="entry name" value="Molybdenum cofactor biosynthesis proteins"/>
    <property type="match status" value="1"/>
</dbReference>
<protein>
    <recommendedName>
        <fullName evidence="1">Putative competence-damage inducible protein</fullName>
    </recommendedName>
</protein>
<gene>
    <name evidence="1" type="primary">cinA</name>
    <name type="ordered locus">SPy_2117</name>
    <name type="ordered locus">M5005_Spy1800</name>
</gene>
<comment type="similarity">
    <text evidence="1">Belongs to the CinA family.</text>
</comment>
<feature type="chain" id="PRO_0000156777" description="Putative competence-damage inducible protein">
    <location>
        <begin position="1"/>
        <end position="423"/>
    </location>
</feature>